<sequence>MKVLTELQKQIFTIVKKENGKPIPPGIVVRMMENSPNFPGKHLIYRAIDDLLDWAILRKAGGVTNQLLVNYEPAEPLLDKKLQGILTLGNKNSGFIRSLDDDKTVYYVHYSNLTGALDGDLVEFCKLDKPQFGDKFDAAVITILKRARILYAGNFLVDQNEFALEYKIVADNPRFYLTMIVNPDSIPNNLASNTKIAFQIDEYDPDNNLCKVSVQQVLGNNDDPLINIKAIMLDNSIVFETNDVVEQHANKLSFDTEEQHKAYRQDLTDLAFVTVDPTTSKDLDDAIYVKTIPTGFVLYVAIADVAHYVNRNSEIDIEAKHKTSSIYLPGHYVVPMLPEQLSNQLCSLNPAQKRYVVVCEISFDNQGRIKTNKLYPATIISKNRFSYDQVNKWLNNKSELNCDETVINSLKAAFTLSDLIQAQRQKRGTIDLSHKETEIVVDEHYFPIKINFLVHDKAETMIENLMVVANETVAWVLTNNKIALPYRVHPRPSKKKLQSLIETVGELNITKPQFNLDTVTSSQIASWLNENKDNPSYEIFVILLLRTLGKAFYSVNPLMHFSIGSNHYTHFTSPIRRYIDLTIHRLLWMHLFTPDQFTDNERDQLKQELEKIADTVNDTEIKIINCERNANDYLTTLLLSKQIGKTFSGFISAITSFGIFMRMDENNFDGLIKITTIPDDFFIFEKEKMVLKGRKTNKVYKIGDRLEAKLSEIDFIQKRAILTLI</sequence>
<gene>
    <name evidence="2" type="primary">rnr</name>
    <name type="synonym">vacB</name>
    <name type="ordered locus">MG104</name>
</gene>
<keyword id="KW-0002">3D-structure</keyword>
<keyword id="KW-0963">Cytoplasm</keyword>
<keyword id="KW-0269">Exonuclease</keyword>
<keyword id="KW-0378">Hydrolase</keyword>
<keyword id="KW-0540">Nuclease</keyword>
<keyword id="KW-1185">Reference proteome</keyword>
<keyword id="KW-0694">RNA-binding</keyword>
<accession>P47350</accession>
<protein>
    <recommendedName>
        <fullName evidence="2">Ribonuclease R</fullName>
        <shortName evidence="2">RNase R</shortName>
        <ecNumber evidence="2">3.1.13.1</ecNumber>
    </recommendedName>
    <alternativeName>
        <fullName>VacB protein homolog</fullName>
    </alternativeName>
</protein>
<dbReference type="EC" id="3.1.13.1" evidence="2"/>
<dbReference type="EMBL" id="L43967">
    <property type="protein sequence ID" value="AAC71322.1"/>
    <property type="molecule type" value="Genomic_DNA"/>
</dbReference>
<dbReference type="EMBL" id="U01795">
    <property type="protein sequence ID" value="AAD12320.1"/>
    <property type="molecule type" value="Genomic_DNA"/>
</dbReference>
<dbReference type="PIR" id="E64211">
    <property type="entry name" value="E64211"/>
</dbReference>
<dbReference type="RefSeq" id="WP_009885662.1">
    <property type="nucleotide sequence ID" value="NC_000908.2"/>
</dbReference>
<dbReference type="PDB" id="7DCY">
    <property type="method" value="X-ray"/>
    <property type="resolution" value="1.97 A"/>
    <property type="chains" value="A=1-725"/>
</dbReference>
<dbReference type="PDB" id="7DIC">
    <property type="method" value="X-ray"/>
    <property type="resolution" value="2.24 A"/>
    <property type="chains" value="A=1-725"/>
</dbReference>
<dbReference type="PDB" id="7DID">
    <property type="method" value="X-ray"/>
    <property type="resolution" value="1.90 A"/>
    <property type="chains" value="A=1-725"/>
</dbReference>
<dbReference type="PDB" id="7DOL">
    <property type="method" value="X-ray"/>
    <property type="resolution" value="2.00 A"/>
    <property type="chains" value="A=1-725"/>
</dbReference>
<dbReference type="PDBsum" id="7DCY"/>
<dbReference type="PDBsum" id="7DIC"/>
<dbReference type="PDBsum" id="7DID"/>
<dbReference type="PDBsum" id="7DOL"/>
<dbReference type="SMR" id="P47350"/>
<dbReference type="FunCoup" id="P47350">
    <property type="interactions" value="158"/>
</dbReference>
<dbReference type="STRING" id="243273.MG_104"/>
<dbReference type="GeneID" id="88282228"/>
<dbReference type="KEGG" id="mge:MG_104"/>
<dbReference type="eggNOG" id="COG0557">
    <property type="taxonomic scope" value="Bacteria"/>
</dbReference>
<dbReference type="HOGENOM" id="CLU_002333_7_3_14"/>
<dbReference type="InParanoid" id="P47350"/>
<dbReference type="OrthoDB" id="9764149at2"/>
<dbReference type="BioCyc" id="MGEN243273:G1GJ2-117-MONOMER"/>
<dbReference type="Proteomes" id="UP000000807">
    <property type="component" value="Chromosome"/>
</dbReference>
<dbReference type="GO" id="GO:0005829">
    <property type="term" value="C:cytosol"/>
    <property type="evidence" value="ECO:0000318"/>
    <property type="project" value="GO_Central"/>
</dbReference>
<dbReference type="GO" id="GO:0008859">
    <property type="term" value="F:exoribonuclease II activity"/>
    <property type="evidence" value="ECO:0007669"/>
    <property type="project" value="UniProtKB-UniRule"/>
</dbReference>
<dbReference type="GO" id="GO:0003723">
    <property type="term" value="F:RNA binding"/>
    <property type="evidence" value="ECO:0007669"/>
    <property type="project" value="UniProtKB-UniRule"/>
</dbReference>
<dbReference type="GO" id="GO:0006402">
    <property type="term" value="P:mRNA catabolic process"/>
    <property type="evidence" value="ECO:0000318"/>
    <property type="project" value="GO_Central"/>
</dbReference>
<dbReference type="CDD" id="cd04471">
    <property type="entry name" value="S1_RNase_R"/>
    <property type="match status" value="1"/>
</dbReference>
<dbReference type="Gene3D" id="2.40.50.140">
    <property type="entry name" value="Nucleic acid-binding proteins"/>
    <property type="match status" value="1"/>
</dbReference>
<dbReference type="HAMAP" id="MF_01895">
    <property type="entry name" value="RNase_R"/>
    <property type="match status" value="1"/>
</dbReference>
<dbReference type="InterPro" id="IPR011129">
    <property type="entry name" value="CSD"/>
</dbReference>
<dbReference type="InterPro" id="IPR012340">
    <property type="entry name" value="NA-bd_OB-fold"/>
</dbReference>
<dbReference type="InterPro" id="IPR001900">
    <property type="entry name" value="RNase_II/R"/>
</dbReference>
<dbReference type="InterPro" id="IPR022966">
    <property type="entry name" value="RNase_II/R_CS"/>
</dbReference>
<dbReference type="InterPro" id="IPR004476">
    <property type="entry name" value="RNase_II/RNase_R"/>
</dbReference>
<dbReference type="InterPro" id="IPR011805">
    <property type="entry name" value="RNase_R"/>
</dbReference>
<dbReference type="InterPro" id="IPR050180">
    <property type="entry name" value="RNR_Ribonuclease"/>
</dbReference>
<dbReference type="InterPro" id="IPR003029">
    <property type="entry name" value="S1_domain"/>
</dbReference>
<dbReference type="NCBIfam" id="TIGR00358">
    <property type="entry name" value="3_prime_RNase"/>
    <property type="match status" value="1"/>
</dbReference>
<dbReference type="NCBIfam" id="TIGR02063">
    <property type="entry name" value="RNase_R"/>
    <property type="match status" value="1"/>
</dbReference>
<dbReference type="PANTHER" id="PTHR23355:SF9">
    <property type="entry name" value="DIS3-LIKE EXONUCLEASE 2"/>
    <property type="match status" value="1"/>
</dbReference>
<dbReference type="PANTHER" id="PTHR23355">
    <property type="entry name" value="RIBONUCLEASE"/>
    <property type="match status" value="1"/>
</dbReference>
<dbReference type="Pfam" id="PF00773">
    <property type="entry name" value="RNB"/>
    <property type="match status" value="1"/>
</dbReference>
<dbReference type="Pfam" id="PF00575">
    <property type="entry name" value="S1"/>
    <property type="match status" value="1"/>
</dbReference>
<dbReference type="SMART" id="SM00357">
    <property type="entry name" value="CSP"/>
    <property type="match status" value="1"/>
</dbReference>
<dbReference type="SMART" id="SM00955">
    <property type="entry name" value="RNB"/>
    <property type="match status" value="1"/>
</dbReference>
<dbReference type="SMART" id="SM00316">
    <property type="entry name" value="S1"/>
    <property type="match status" value="1"/>
</dbReference>
<dbReference type="SUPFAM" id="SSF50249">
    <property type="entry name" value="Nucleic acid-binding proteins"/>
    <property type="match status" value="3"/>
</dbReference>
<dbReference type="PROSITE" id="PS01175">
    <property type="entry name" value="RIBONUCLEASE_II"/>
    <property type="match status" value="1"/>
</dbReference>
<dbReference type="PROSITE" id="PS50126">
    <property type="entry name" value="S1"/>
    <property type="match status" value="1"/>
</dbReference>
<reference key="1">
    <citation type="journal article" date="1995" name="Science">
        <title>The minimal gene complement of Mycoplasma genitalium.</title>
        <authorList>
            <person name="Fraser C.M."/>
            <person name="Gocayne J.D."/>
            <person name="White O."/>
            <person name="Adams M.D."/>
            <person name="Clayton R.A."/>
            <person name="Fleischmann R.D."/>
            <person name="Bult C.J."/>
            <person name="Kerlavage A.R."/>
            <person name="Sutton G.G."/>
            <person name="Kelley J.M."/>
            <person name="Fritchman J.L."/>
            <person name="Weidman J.F."/>
            <person name="Small K.V."/>
            <person name="Sandusky M."/>
            <person name="Fuhrmann J.L."/>
            <person name="Nguyen D.T."/>
            <person name="Utterback T.R."/>
            <person name="Saudek D.M."/>
            <person name="Phillips C.A."/>
            <person name="Merrick J.M."/>
            <person name="Tomb J.-F."/>
            <person name="Dougherty B.A."/>
            <person name="Bott K.F."/>
            <person name="Hu P.-C."/>
            <person name="Lucier T.S."/>
            <person name="Peterson S.N."/>
            <person name="Smith H.O."/>
            <person name="Hutchison C.A. III"/>
            <person name="Venter J.C."/>
        </authorList>
    </citation>
    <scope>NUCLEOTIDE SEQUENCE [LARGE SCALE GENOMIC DNA]</scope>
    <source>
        <strain>ATCC 33530 / DSM 19775 / NCTC 10195 / G37</strain>
    </source>
</reference>
<reference key="2">
    <citation type="journal article" date="1993" name="J. Bacteriol.">
        <title>A survey of the Mycoplasma genitalium genome by using random sequencing.</title>
        <authorList>
            <person name="Peterson S.N."/>
            <person name="Hu P.-C."/>
            <person name="Bott K.F."/>
            <person name="Hutchison C.A. III"/>
        </authorList>
    </citation>
    <scope>NUCLEOTIDE SEQUENCE [GENOMIC DNA] OF 73-163</scope>
    <source>
        <strain>ATCC 33530 / DSM 19775 / NCTC 10195 / G37</strain>
    </source>
</reference>
<evidence type="ECO:0000255" key="1"/>
<evidence type="ECO:0000255" key="2">
    <source>
        <dbReference type="HAMAP-Rule" id="MF_01895"/>
    </source>
</evidence>
<evidence type="ECO:0007829" key="3">
    <source>
        <dbReference type="PDB" id="7DIC"/>
    </source>
</evidence>
<evidence type="ECO:0007829" key="4">
    <source>
        <dbReference type="PDB" id="7DID"/>
    </source>
</evidence>
<organism>
    <name type="scientific">Mycoplasma genitalium (strain ATCC 33530 / DSM 19775 / NCTC 10195 / G37)</name>
    <name type="common">Mycoplasmoides genitalium</name>
    <dbReference type="NCBI Taxonomy" id="243273"/>
    <lineage>
        <taxon>Bacteria</taxon>
        <taxon>Bacillati</taxon>
        <taxon>Mycoplasmatota</taxon>
        <taxon>Mycoplasmoidales</taxon>
        <taxon>Mycoplasmoidaceae</taxon>
        <taxon>Mycoplasmoides</taxon>
    </lineage>
</organism>
<proteinExistence type="evidence at protein level"/>
<name>RNR_MYCGE</name>
<feature type="chain" id="PRO_0000166408" description="Ribonuclease R">
    <location>
        <begin position="1"/>
        <end position="725"/>
    </location>
</feature>
<feature type="domain" description="RNB" evidence="1">
    <location>
        <begin position="264"/>
        <end position="592"/>
    </location>
</feature>
<feature type="domain" description="S1 motif" evidence="2">
    <location>
        <begin position="644"/>
        <end position="725"/>
    </location>
</feature>
<feature type="strand" evidence="4">
    <location>
        <begin position="83"/>
        <end position="88"/>
    </location>
</feature>
<feature type="helix" evidence="4">
    <location>
        <begin position="90"/>
        <end position="92"/>
    </location>
</feature>
<feature type="strand" evidence="4">
    <location>
        <begin position="94"/>
        <end position="100"/>
    </location>
</feature>
<feature type="strand" evidence="4">
    <location>
        <begin position="105"/>
        <end position="108"/>
    </location>
</feature>
<feature type="helix" evidence="4">
    <location>
        <begin position="110"/>
        <end position="112"/>
    </location>
</feature>
<feature type="strand" evidence="4">
    <location>
        <begin position="121"/>
        <end position="126"/>
    </location>
</feature>
<feature type="strand" evidence="4">
    <location>
        <begin position="133"/>
        <end position="145"/>
    </location>
</feature>
<feature type="strand" evidence="4">
    <location>
        <begin position="151"/>
        <end position="160"/>
    </location>
</feature>
<feature type="strand" evidence="4">
    <location>
        <begin position="163"/>
        <end position="172"/>
    </location>
</feature>
<feature type="strand" evidence="4">
    <location>
        <begin position="178"/>
        <end position="181"/>
    </location>
</feature>
<feature type="helix" evidence="4">
    <location>
        <begin position="183"/>
        <end position="185"/>
    </location>
</feature>
<feature type="strand" evidence="4">
    <location>
        <begin position="192"/>
        <end position="204"/>
    </location>
</feature>
<feature type="turn" evidence="4">
    <location>
        <begin position="205"/>
        <end position="208"/>
    </location>
</feature>
<feature type="strand" evidence="4">
    <location>
        <begin position="209"/>
        <end position="220"/>
    </location>
</feature>
<feature type="helix" evidence="4">
    <location>
        <begin position="224"/>
        <end position="234"/>
    </location>
</feature>
<feature type="helix" evidence="4">
    <location>
        <begin position="243"/>
        <end position="251"/>
    </location>
</feature>
<feature type="helix" evidence="4">
    <location>
        <begin position="256"/>
        <end position="260"/>
    </location>
</feature>
<feature type="strand" evidence="4">
    <location>
        <begin position="264"/>
        <end position="266"/>
    </location>
</feature>
<feature type="strand" evidence="4">
    <location>
        <begin position="273"/>
        <end position="276"/>
    </location>
</feature>
<feature type="strand" evidence="4">
    <location>
        <begin position="285"/>
        <end position="292"/>
    </location>
</feature>
<feature type="strand" evidence="4">
    <location>
        <begin position="295"/>
        <end position="303"/>
    </location>
</feature>
<feature type="helix" evidence="4">
    <location>
        <begin position="305"/>
        <end position="308"/>
    </location>
</feature>
<feature type="helix" evidence="4">
    <location>
        <begin position="314"/>
        <end position="322"/>
    </location>
</feature>
<feature type="strand" evidence="4">
    <location>
        <begin position="326"/>
        <end position="328"/>
    </location>
</feature>
<feature type="turn" evidence="4">
    <location>
        <begin position="329"/>
        <end position="331"/>
    </location>
</feature>
<feature type="strand" evidence="4">
    <location>
        <begin position="332"/>
        <end position="334"/>
    </location>
</feature>
<feature type="helix" evidence="4">
    <location>
        <begin position="339"/>
        <end position="342"/>
    </location>
</feature>
<feature type="turn" evidence="4">
    <location>
        <begin position="343"/>
        <end position="346"/>
    </location>
</feature>
<feature type="strand" evidence="4">
    <location>
        <begin position="353"/>
        <end position="364"/>
    </location>
</feature>
<feature type="strand" evidence="4">
    <location>
        <begin position="369"/>
        <end position="380"/>
    </location>
</feature>
<feature type="strand" evidence="4">
    <location>
        <begin position="383"/>
        <end position="386"/>
    </location>
</feature>
<feature type="helix" evidence="4">
    <location>
        <begin position="387"/>
        <end position="394"/>
    </location>
</feature>
<feature type="helix" evidence="4">
    <location>
        <begin position="404"/>
        <end position="427"/>
    </location>
</feature>
<feature type="strand" evidence="4">
    <location>
        <begin position="437"/>
        <end position="441"/>
    </location>
</feature>
<feature type="strand" evidence="4">
    <location>
        <begin position="447"/>
        <end position="452"/>
    </location>
</feature>
<feature type="helix" evidence="4">
    <location>
        <begin position="457"/>
        <end position="479"/>
    </location>
</feature>
<feature type="strand" evidence="4">
    <location>
        <begin position="486"/>
        <end position="489"/>
    </location>
</feature>
<feature type="helix" evidence="4">
    <location>
        <begin position="494"/>
        <end position="505"/>
    </location>
</feature>
<feature type="turn" evidence="4">
    <location>
        <begin position="506"/>
        <end position="508"/>
    </location>
</feature>
<feature type="turn" evidence="4">
    <location>
        <begin position="516"/>
        <end position="518"/>
    </location>
</feature>
<feature type="helix" evidence="4">
    <location>
        <begin position="521"/>
        <end position="529"/>
    </location>
</feature>
<feature type="turn" evidence="4">
    <location>
        <begin position="530"/>
        <end position="533"/>
    </location>
</feature>
<feature type="helix" evidence="4">
    <location>
        <begin position="537"/>
        <end position="548"/>
    </location>
</feature>
<feature type="strand" evidence="4">
    <location>
        <begin position="552"/>
        <end position="556"/>
    </location>
</feature>
<feature type="turn" evidence="4">
    <location>
        <begin position="561"/>
        <end position="564"/>
    </location>
</feature>
<feature type="strand" evidence="3">
    <location>
        <begin position="565"/>
        <end position="567"/>
    </location>
</feature>
<feature type="turn" evidence="4">
    <location>
        <begin position="574"/>
        <end position="576"/>
    </location>
</feature>
<feature type="helix" evidence="4">
    <location>
        <begin position="578"/>
        <end position="590"/>
    </location>
</feature>
<feature type="helix" evidence="4">
    <location>
        <begin position="594"/>
        <end position="596"/>
    </location>
</feature>
<feature type="helix" evidence="4">
    <location>
        <begin position="599"/>
        <end position="639"/>
    </location>
</feature>
<feature type="strand" evidence="4">
    <location>
        <begin position="646"/>
        <end position="655"/>
    </location>
</feature>
<feature type="strand" evidence="4">
    <location>
        <begin position="658"/>
        <end position="663"/>
    </location>
</feature>
<feature type="turn" evidence="4">
    <location>
        <begin position="664"/>
        <end position="666"/>
    </location>
</feature>
<feature type="strand" evidence="4">
    <location>
        <begin position="669"/>
        <end position="673"/>
    </location>
</feature>
<feature type="helix" evidence="4">
    <location>
        <begin position="674"/>
        <end position="676"/>
    </location>
</feature>
<feature type="strand" evidence="4">
    <location>
        <begin position="682"/>
        <end position="685"/>
    </location>
</feature>
<feature type="turn" evidence="4">
    <location>
        <begin position="686"/>
        <end position="689"/>
    </location>
</feature>
<feature type="strand" evidence="4">
    <location>
        <begin position="690"/>
        <end position="693"/>
    </location>
</feature>
<feature type="turn" evidence="4">
    <location>
        <begin position="694"/>
        <end position="696"/>
    </location>
</feature>
<feature type="strand" evidence="3">
    <location>
        <begin position="699"/>
        <end position="701"/>
    </location>
</feature>
<feature type="strand" evidence="4">
    <location>
        <begin position="705"/>
        <end position="714"/>
    </location>
</feature>
<feature type="turn" evidence="4">
    <location>
        <begin position="715"/>
        <end position="718"/>
    </location>
</feature>
<feature type="strand" evidence="4">
    <location>
        <begin position="719"/>
        <end position="724"/>
    </location>
</feature>
<comment type="function">
    <text evidence="2">3'-5' exoribonuclease that releases 5'-nucleoside monophosphates and is involved in maturation of structured RNAs.</text>
</comment>
<comment type="catalytic activity">
    <reaction evidence="2">
        <text>Exonucleolytic cleavage in the 3'- to 5'-direction to yield nucleoside 5'-phosphates.</text>
        <dbReference type="EC" id="3.1.13.1"/>
    </reaction>
</comment>
<comment type="subcellular location">
    <subcellularLocation>
        <location evidence="2">Cytoplasm</location>
    </subcellularLocation>
</comment>
<comment type="similarity">
    <text evidence="2">Belongs to the RNR ribonuclease family. RNase R subfamily.</text>
</comment>